<feature type="initiator methionine" description="Removed" evidence="2">
    <location>
        <position position="1"/>
    </location>
</feature>
<feature type="chain" id="PRO_0000351158" description="Tail tube protein" evidence="2">
    <location>
        <begin position="2"/>
        <end position="177"/>
    </location>
</feature>
<protein>
    <recommendedName>
        <fullName evidence="5">Tail tube protein</fullName>
    </recommendedName>
    <alternativeName>
        <fullName evidence="3">Virion protein F</fullName>
    </alternativeName>
</protein>
<organismHost>
    <name type="scientific">Serratia marcescens</name>
    <dbReference type="NCBI Taxonomy" id="615"/>
</organismHost>
<organism>
    <name type="scientific">Serratia phage KSP90</name>
    <name type="common">Serratia marcescens bacteriophage KSP90</name>
    <dbReference type="NCBI Taxonomy" id="552528"/>
    <lineage>
        <taxon>Viruses</taxon>
        <taxon>Duplodnaviria</taxon>
        <taxon>Heunggongvirae</taxon>
        <taxon>Uroviricota</taxon>
        <taxon>Caudoviricetes</taxon>
        <taxon>Ackermannviridae</taxon>
        <taxon>Miltonvirus</taxon>
    </lineage>
</organism>
<proteinExistence type="evidence at protein level"/>
<name>TUBE_BPSK9</name>
<reference evidence="4 5" key="1">
    <citation type="journal article" date="2009" name="FEMS Microbiol. Lett.">
        <title>Morphological and genetic analysis of three bacteriophages of Serratia marcescens isolated from environmental water.</title>
        <authorList>
            <person name="Matsushita K."/>
            <person name="Uchiyama J."/>
            <person name="Kato S."/>
            <person name="Ujihara T."/>
            <person name="Hoshiba H."/>
            <person name="Sugihara S."/>
            <person name="Muraoka A."/>
            <person name="Wakiguchi H."/>
            <person name="Matsuzaki S."/>
        </authorList>
    </citation>
    <scope>NUCLEOTIDE SEQUENCE [GENOMIC DNA]</scope>
    <scope>PROTEIN SEQUENCE OF 2-21</scope>
</reference>
<dbReference type="EMBL" id="AB452990">
    <property type="protein sequence ID" value="BAH15166.1"/>
    <property type="molecule type" value="Genomic_DNA"/>
</dbReference>
<dbReference type="SMR" id="P85992"/>
<dbReference type="GO" id="GO:0098026">
    <property type="term" value="C:virus tail, tube"/>
    <property type="evidence" value="ECO:0007669"/>
    <property type="project" value="UniProtKB-KW"/>
</dbReference>
<dbReference type="GO" id="GO:0099000">
    <property type="term" value="P:symbiont genome ejection through host cell envelope, contractile tail mechanism"/>
    <property type="evidence" value="ECO:0007669"/>
    <property type="project" value="UniProtKB-KW"/>
</dbReference>
<sequence length="177" mass="19948">MATVNEFRGAMSRGGGVQRQHRWRVTISFPSFAASADQTRDVCLLAVTTNTPTGQLGEILVPWGGRELPFPGDRRFEALPITFINVVNNGPYNSMEVWQQYINGSESNRASANPDEYFRDVVLELLDANDNVTKTWTLQGAWPQNLGQLELDMSAMDSYTQFTCDLRYFQAVSDRSR</sequence>
<keyword id="KW-0903">Direct protein sequencing</keyword>
<keyword id="KW-0426">Late protein</keyword>
<keyword id="KW-1242">Viral contractile tail ejection system</keyword>
<keyword id="KW-1171">Viral genome ejection through host cell envelope</keyword>
<keyword id="KW-1162">Viral penetration into host cytoplasm</keyword>
<keyword id="KW-1227">Viral tail protein</keyword>
<keyword id="KW-1228">Viral tail tube protein</keyword>
<keyword id="KW-0946">Virion</keyword>
<keyword id="KW-1160">Virus entry into host cell</keyword>
<accession>P85992</accession>
<accession>B9A7C0</accession>
<evidence type="ECO:0000250" key="1">
    <source>
        <dbReference type="UniProtKB" id="P13333"/>
    </source>
</evidence>
<evidence type="ECO:0000269" key="2">
    <source>
    </source>
</evidence>
<evidence type="ECO:0000303" key="3">
    <source>
    </source>
</evidence>
<evidence type="ECO:0000305" key="4"/>
<evidence type="ECO:0000312" key="5">
    <source>
        <dbReference type="EMBL" id="BAH15166.1"/>
    </source>
</evidence>
<comment type="function">
    <text evidence="1">Structural component of the bacteriophage tail which consists of a contractile sheath, a tube and a baseplate. The central cylindrical segment of the tail consists of a rigid tube, composed of multiple copies of the tail tube protein. During infection, contraction of the sheath drives the central tube through the host outer membrane, creating a channel for DNA ejection from the capsid into the host cell.</text>
</comment>
<comment type="subcellular location">
    <subcellularLocation>
        <location evidence="2">Virion</location>
    </subcellularLocation>
</comment>
<comment type="similarity">
    <text evidence="4">Belongs to the T4-like viruses Gp19 protein family.</text>
</comment>